<reference key="1">
    <citation type="journal article" date="2000" name="Nature">
        <title>The genome sequence of the plant pathogen Xylella fastidiosa.</title>
        <authorList>
            <person name="Simpson A.J.G."/>
            <person name="Reinach F.C."/>
            <person name="Arruda P."/>
            <person name="Abreu F.A."/>
            <person name="Acencio M."/>
            <person name="Alvarenga R."/>
            <person name="Alves L.M.C."/>
            <person name="Araya J.E."/>
            <person name="Baia G.S."/>
            <person name="Baptista C.S."/>
            <person name="Barros M.H."/>
            <person name="Bonaccorsi E.D."/>
            <person name="Bordin S."/>
            <person name="Bove J.M."/>
            <person name="Briones M.R.S."/>
            <person name="Bueno M.R.P."/>
            <person name="Camargo A.A."/>
            <person name="Camargo L.E.A."/>
            <person name="Carraro D.M."/>
            <person name="Carrer H."/>
            <person name="Colauto N.B."/>
            <person name="Colombo C."/>
            <person name="Costa F.F."/>
            <person name="Costa M.C.R."/>
            <person name="Costa-Neto C.M."/>
            <person name="Coutinho L.L."/>
            <person name="Cristofani M."/>
            <person name="Dias-Neto E."/>
            <person name="Docena C."/>
            <person name="El-Dorry H."/>
            <person name="Facincani A.P."/>
            <person name="Ferreira A.J.S."/>
            <person name="Ferreira V.C.A."/>
            <person name="Ferro J.A."/>
            <person name="Fraga J.S."/>
            <person name="Franca S.C."/>
            <person name="Franco M.C."/>
            <person name="Frohme M."/>
            <person name="Furlan L.R."/>
            <person name="Garnier M."/>
            <person name="Goldman G.H."/>
            <person name="Goldman M.H.S."/>
            <person name="Gomes S.L."/>
            <person name="Gruber A."/>
            <person name="Ho P.L."/>
            <person name="Hoheisel J.D."/>
            <person name="Junqueira M.L."/>
            <person name="Kemper E.L."/>
            <person name="Kitajima J.P."/>
            <person name="Krieger J.E."/>
            <person name="Kuramae E.E."/>
            <person name="Laigret F."/>
            <person name="Lambais M.R."/>
            <person name="Leite L.C.C."/>
            <person name="Lemos E.G.M."/>
            <person name="Lemos M.V.F."/>
            <person name="Lopes S.A."/>
            <person name="Lopes C.R."/>
            <person name="Machado J.A."/>
            <person name="Machado M.A."/>
            <person name="Madeira A.M.B.N."/>
            <person name="Madeira H.M.F."/>
            <person name="Marino C.L."/>
            <person name="Marques M.V."/>
            <person name="Martins E.A.L."/>
            <person name="Martins E.M.F."/>
            <person name="Matsukuma A.Y."/>
            <person name="Menck C.F.M."/>
            <person name="Miracca E.C."/>
            <person name="Miyaki C.Y."/>
            <person name="Monteiro-Vitorello C.B."/>
            <person name="Moon D.H."/>
            <person name="Nagai M.A."/>
            <person name="Nascimento A.L.T.O."/>
            <person name="Netto L.E.S."/>
            <person name="Nhani A. Jr."/>
            <person name="Nobrega F.G."/>
            <person name="Nunes L.R."/>
            <person name="Oliveira M.A."/>
            <person name="de Oliveira M.C."/>
            <person name="de Oliveira R.C."/>
            <person name="Palmieri D.A."/>
            <person name="Paris A."/>
            <person name="Peixoto B.R."/>
            <person name="Pereira G.A.G."/>
            <person name="Pereira H.A. Jr."/>
            <person name="Pesquero J.B."/>
            <person name="Quaggio R.B."/>
            <person name="Roberto P.G."/>
            <person name="Rodrigues V."/>
            <person name="de Rosa A.J.M."/>
            <person name="de Rosa V.E. Jr."/>
            <person name="de Sa R.G."/>
            <person name="Santelli R.V."/>
            <person name="Sawasaki H.E."/>
            <person name="da Silva A.C.R."/>
            <person name="da Silva A.M."/>
            <person name="da Silva F.R."/>
            <person name="Silva W.A. Jr."/>
            <person name="da Silveira J.F."/>
            <person name="Silvestri M.L.Z."/>
            <person name="Siqueira W.J."/>
            <person name="de Souza A.A."/>
            <person name="de Souza A.P."/>
            <person name="Terenzi M.F."/>
            <person name="Truffi D."/>
            <person name="Tsai S.M."/>
            <person name="Tsuhako M.H."/>
            <person name="Vallada H."/>
            <person name="Van Sluys M.A."/>
            <person name="Verjovski-Almeida S."/>
            <person name="Vettore A.L."/>
            <person name="Zago M.A."/>
            <person name="Zatz M."/>
            <person name="Meidanis J."/>
            <person name="Setubal J.C."/>
        </authorList>
    </citation>
    <scope>NUCLEOTIDE SEQUENCE [LARGE SCALE GENOMIC DNA]</scope>
    <source>
        <strain>9a5c</strain>
    </source>
</reference>
<sequence length="179" mass="19190">MAEERSQRNRDRSREEKIDDGMIEKLVAVNRVSKTVKGGRQFTFTALTIVGNGEGSVGFGYGKAREVPVAIQKSMEYARKTMANVSLNNGTLWHPVKANHGAACVFMKPASEGTGVIAGGAMRAVLEAVGVKDVLAKAIGSRNPINLVRATLKGLEDMQSPTHIALKRGKNVRGFSHGS</sequence>
<evidence type="ECO:0000255" key="1">
    <source>
        <dbReference type="HAMAP-Rule" id="MF_01307"/>
    </source>
</evidence>
<evidence type="ECO:0000305" key="2"/>
<protein>
    <recommendedName>
        <fullName evidence="1">Small ribosomal subunit protein uS5</fullName>
    </recommendedName>
    <alternativeName>
        <fullName evidence="2">30S ribosomal protein S5</fullName>
    </alternativeName>
</protein>
<keyword id="KW-0687">Ribonucleoprotein</keyword>
<keyword id="KW-0689">Ribosomal protein</keyword>
<keyword id="KW-0694">RNA-binding</keyword>
<keyword id="KW-0699">rRNA-binding</keyword>
<organism>
    <name type="scientific">Xylella fastidiosa (strain 9a5c)</name>
    <dbReference type="NCBI Taxonomy" id="160492"/>
    <lineage>
        <taxon>Bacteria</taxon>
        <taxon>Pseudomonadati</taxon>
        <taxon>Pseudomonadota</taxon>
        <taxon>Gammaproteobacteria</taxon>
        <taxon>Lysobacterales</taxon>
        <taxon>Lysobacteraceae</taxon>
        <taxon>Xylella</taxon>
    </lineage>
</organism>
<gene>
    <name evidence="1" type="primary">rpsE</name>
    <name type="ordered locus">XF_1169</name>
</gene>
<comment type="function">
    <text evidence="1">With S4 and S12 plays an important role in translational accuracy.</text>
</comment>
<comment type="function">
    <text evidence="1">Located at the back of the 30S subunit body where it stabilizes the conformation of the head with respect to the body.</text>
</comment>
<comment type="subunit">
    <text evidence="1">Part of the 30S ribosomal subunit. Contacts proteins S4 and S8.</text>
</comment>
<comment type="domain">
    <text>The N-terminal domain interacts with the head of the 30S subunit; the C-terminal domain interacts with the body and contacts protein S4. The interaction surface between S4 and S5 is involved in control of translational fidelity.</text>
</comment>
<comment type="similarity">
    <text evidence="1">Belongs to the universal ribosomal protein uS5 family.</text>
</comment>
<accession>Q9PE59</accession>
<name>RS5_XYLFA</name>
<proteinExistence type="inferred from homology"/>
<feature type="chain" id="PRO_0000131638" description="Small ribosomal subunit protein uS5">
    <location>
        <begin position="1"/>
        <end position="179"/>
    </location>
</feature>
<feature type="domain" description="S5 DRBM" evidence="1">
    <location>
        <begin position="22"/>
        <end position="85"/>
    </location>
</feature>
<dbReference type="EMBL" id="AE003849">
    <property type="protein sequence ID" value="AAF83979.1"/>
    <property type="molecule type" value="Genomic_DNA"/>
</dbReference>
<dbReference type="PIR" id="B82714">
    <property type="entry name" value="B82714"/>
</dbReference>
<dbReference type="RefSeq" id="WP_010893682.1">
    <property type="nucleotide sequence ID" value="NC_002488.3"/>
</dbReference>
<dbReference type="SMR" id="Q9PE59"/>
<dbReference type="STRING" id="160492.XF_1169"/>
<dbReference type="KEGG" id="xfa:XF_1169"/>
<dbReference type="eggNOG" id="COG0098">
    <property type="taxonomic scope" value="Bacteria"/>
</dbReference>
<dbReference type="HOGENOM" id="CLU_065898_2_2_6"/>
<dbReference type="Proteomes" id="UP000000812">
    <property type="component" value="Chromosome"/>
</dbReference>
<dbReference type="GO" id="GO:0015935">
    <property type="term" value="C:small ribosomal subunit"/>
    <property type="evidence" value="ECO:0007669"/>
    <property type="project" value="InterPro"/>
</dbReference>
<dbReference type="GO" id="GO:0019843">
    <property type="term" value="F:rRNA binding"/>
    <property type="evidence" value="ECO:0007669"/>
    <property type="project" value="UniProtKB-UniRule"/>
</dbReference>
<dbReference type="GO" id="GO:0003735">
    <property type="term" value="F:structural constituent of ribosome"/>
    <property type="evidence" value="ECO:0007669"/>
    <property type="project" value="InterPro"/>
</dbReference>
<dbReference type="GO" id="GO:0006412">
    <property type="term" value="P:translation"/>
    <property type="evidence" value="ECO:0007669"/>
    <property type="project" value="UniProtKB-UniRule"/>
</dbReference>
<dbReference type="FunFam" id="3.30.160.20:FF:000001">
    <property type="entry name" value="30S ribosomal protein S5"/>
    <property type="match status" value="1"/>
</dbReference>
<dbReference type="FunFam" id="3.30.230.10:FF:000002">
    <property type="entry name" value="30S ribosomal protein S5"/>
    <property type="match status" value="1"/>
</dbReference>
<dbReference type="Gene3D" id="3.30.160.20">
    <property type="match status" value="1"/>
</dbReference>
<dbReference type="Gene3D" id="3.30.230.10">
    <property type="match status" value="1"/>
</dbReference>
<dbReference type="HAMAP" id="MF_01307_B">
    <property type="entry name" value="Ribosomal_uS5_B"/>
    <property type="match status" value="1"/>
</dbReference>
<dbReference type="InterPro" id="IPR020568">
    <property type="entry name" value="Ribosomal_Su5_D2-typ_SF"/>
</dbReference>
<dbReference type="InterPro" id="IPR000851">
    <property type="entry name" value="Ribosomal_uS5"/>
</dbReference>
<dbReference type="InterPro" id="IPR005712">
    <property type="entry name" value="Ribosomal_uS5_bac-type"/>
</dbReference>
<dbReference type="InterPro" id="IPR005324">
    <property type="entry name" value="Ribosomal_uS5_C"/>
</dbReference>
<dbReference type="InterPro" id="IPR013810">
    <property type="entry name" value="Ribosomal_uS5_N"/>
</dbReference>
<dbReference type="InterPro" id="IPR018192">
    <property type="entry name" value="Ribosomal_uS5_N_CS"/>
</dbReference>
<dbReference type="InterPro" id="IPR014721">
    <property type="entry name" value="Ribsml_uS5_D2-typ_fold_subgr"/>
</dbReference>
<dbReference type="NCBIfam" id="TIGR01021">
    <property type="entry name" value="rpsE_bact"/>
    <property type="match status" value="1"/>
</dbReference>
<dbReference type="PANTHER" id="PTHR48277">
    <property type="entry name" value="MITOCHONDRIAL RIBOSOMAL PROTEIN S5"/>
    <property type="match status" value="1"/>
</dbReference>
<dbReference type="PANTHER" id="PTHR48277:SF1">
    <property type="entry name" value="MITOCHONDRIAL RIBOSOMAL PROTEIN S5"/>
    <property type="match status" value="1"/>
</dbReference>
<dbReference type="Pfam" id="PF00333">
    <property type="entry name" value="Ribosomal_S5"/>
    <property type="match status" value="1"/>
</dbReference>
<dbReference type="Pfam" id="PF03719">
    <property type="entry name" value="Ribosomal_S5_C"/>
    <property type="match status" value="1"/>
</dbReference>
<dbReference type="SUPFAM" id="SSF54768">
    <property type="entry name" value="dsRNA-binding domain-like"/>
    <property type="match status" value="1"/>
</dbReference>
<dbReference type="SUPFAM" id="SSF54211">
    <property type="entry name" value="Ribosomal protein S5 domain 2-like"/>
    <property type="match status" value="1"/>
</dbReference>
<dbReference type="PROSITE" id="PS00585">
    <property type="entry name" value="RIBOSOMAL_S5"/>
    <property type="match status" value="1"/>
</dbReference>
<dbReference type="PROSITE" id="PS50881">
    <property type="entry name" value="S5_DSRBD"/>
    <property type="match status" value="1"/>
</dbReference>